<keyword id="KW-0002">3D-structure</keyword>
<keyword id="KW-0044">Antibiotic</keyword>
<keyword id="KW-0929">Antimicrobial</keyword>
<keyword id="KW-0903">Direct protein sequencing</keyword>
<keyword id="KW-1015">Disulfide bond</keyword>
<keyword id="KW-0960">Knottin</keyword>
<keyword id="KW-0611">Plant defense</keyword>
<evidence type="ECO:0000255" key="1">
    <source>
        <dbReference type="PROSITE-ProRule" id="PRU00395"/>
    </source>
</evidence>
<evidence type="ECO:0000269" key="2">
    <source>
    </source>
</evidence>
<evidence type="ECO:0000269" key="3">
    <source ref="2"/>
</evidence>
<evidence type="ECO:0000305" key="4"/>
<evidence type="ECO:0007829" key="5">
    <source>
        <dbReference type="PDB" id="1BH4"/>
    </source>
</evidence>
<comment type="function">
    <text>Probably participates in a plant defense mechanism. Has antibiotic activity. Inhibits the cytopathic effects and replication of the human immunodeficiency virus. Active against the Gram-positive S.aureus with a minimum inhibition concentration of approximately 0.2 microM. Relatively ineffective against Gram-negative bacteria such as E.coli and P.aeruginosa.</text>
</comment>
<comment type="domain">
    <text>The presence of a 'disulfide through disulfide knot' structurally defines this protein as a knottin.</text>
</comment>
<comment type="PTM">
    <text>This is a cyclic peptide.</text>
</comment>
<comment type="mass spectrometry"/>
<comment type="similarity">
    <text evidence="1">Belongs to the cyclotide family. Bracelet subfamily.</text>
</comment>
<comment type="caution">
    <text evidence="4">This peptide is cyclic. The start position was chosen by similarity to OAK1 (kalata-B1) for which the DNA sequence is known.</text>
</comment>
<name>CIRA_CHAPA</name>
<organism>
    <name type="scientific">Chassalia parviflora</name>
    <dbReference type="NCBI Taxonomy" id="58431"/>
    <lineage>
        <taxon>Eukaryota</taxon>
        <taxon>Viridiplantae</taxon>
        <taxon>Streptophyta</taxon>
        <taxon>Embryophyta</taxon>
        <taxon>Tracheophyta</taxon>
        <taxon>Spermatophyta</taxon>
        <taxon>Magnoliopsida</taxon>
        <taxon>eudicotyledons</taxon>
        <taxon>Gunneridae</taxon>
        <taxon>Pentapetalae</taxon>
        <taxon>asterids</taxon>
        <taxon>lamiids</taxon>
        <taxon>Gentianales</taxon>
        <taxon>Rubiaceae</taxon>
        <taxon>Rubioideae</taxon>
        <taxon>Palicoureeae</taxon>
        <taxon>Chassalia</taxon>
    </lineage>
</organism>
<protein>
    <recommendedName>
        <fullName>Circulin-A</fullName>
        <shortName>CIRA</shortName>
    </recommendedName>
</protein>
<dbReference type="PDB" id="1BH4">
    <property type="method" value="NMR"/>
    <property type="chains" value="A=4-30"/>
</dbReference>
<dbReference type="PDBsum" id="1BH4"/>
<dbReference type="SMR" id="P56871"/>
<dbReference type="EvolutionaryTrace" id="P56871"/>
<dbReference type="GO" id="GO:0042742">
    <property type="term" value="P:defense response to bacterium"/>
    <property type="evidence" value="ECO:0007669"/>
    <property type="project" value="UniProtKB-KW"/>
</dbReference>
<dbReference type="InterPro" id="IPR005535">
    <property type="entry name" value="Cyclotide"/>
</dbReference>
<dbReference type="InterPro" id="IPR012323">
    <property type="entry name" value="Cyclotide_bracelet_CS"/>
</dbReference>
<dbReference type="InterPro" id="IPR036146">
    <property type="entry name" value="Cyclotide_sf"/>
</dbReference>
<dbReference type="Pfam" id="PF03784">
    <property type="entry name" value="Cyclotide"/>
    <property type="match status" value="1"/>
</dbReference>
<dbReference type="PIRSF" id="PIRSF037891">
    <property type="entry name" value="Cycloviolacin"/>
    <property type="match status" value="1"/>
</dbReference>
<dbReference type="SUPFAM" id="SSF57038">
    <property type="entry name" value="Cyclotides"/>
    <property type="match status" value="1"/>
</dbReference>
<dbReference type="PROSITE" id="PS51052">
    <property type="entry name" value="CYCLOTIDE"/>
    <property type="match status" value="1"/>
</dbReference>
<dbReference type="PROSITE" id="PS60008">
    <property type="entry name" value="CYCLOTIDE_BRACELET"/>
    <property type="match status" value="1"/>
</dbReference>
<reference key="1">
    <citation type="journal article" date="1965" name="Experientia">
        <title>Chemical structure of circulin A.</title>
        <authorList>
            <person name="Fujikawa K."/>
            <person name="Suketa Y."/>
            <person name="Hayashi K."/>
            <person name="Suzuki T."/>
        </authorList>
    </citation>
    <scope>PROTEIN SEQUENCE</scope>
</reference>
<reference key="2">
    <citation type="journal article" date="1994" name="J. Am. Chem. Soc.">
        <title>Circulins A and B: novel HIV-inhibitor macrocyclic peptide from tropical tree Chassalia parvifolia.</title>
        <authorList>
            <person name="Gustafson K.R."/>
            <person name="Sowder R.C. II"/>
            <person name="Henderson L.E."/>
            <person name="Parson I.C."/>
            <person name="Kashman Y."/>
            <person name="Cardellina J.H. Jr."/>
            <person name="McMahon J.B."/>
            <person name="Buckheit R.W. Jr."/>
            <person name="Pannell L.K."/>
            <person name="Boyd M.R."/>
        </authorList>
    </citation>
    <scope>PROTEIN SEQUENCE</scope>
    <scope>MASS SPECTROMETRY</scope>
</reference>
<reference key="3">
    <citation type="journal article" date="1996" name="Biochem. Biophys. Res. Commun.">
        <title>Analysis of the disulfide linkage pattern in circulin A and B, HIV-inhibitory macrocyclic peptides.</title>
        <authorList>
            <person name="Derua R."/>
            <person name="Gustafson K.R."/>
            <person name="Pannell L.K."/>
        </authorList>
    </citation>
    <scope>DISULFIDE BONDS</scope>
</reference>
<reference key="4">
    <citation type="journal article" date="1999" name="Proc. Natl. Acad. Sci. U.S.A.">
        <title>An unusual structural motif of antimicrobial peptides containing end-to-end macrocycle and cystine-knot disulfides.</title>
        <authorList>
            <person name="Tam J.P."/>
            <person name="Lu Y.-A."/>
            <person name="Yang J.-L."/>
            <person name="Chiu K.-W."/>
        </authorList>
    </citation>
    <scope>SYNTHESIS</scope>
    <scope>ANTIBACTERIAL ACTIVITY</scope>
</reference>
<reference key="5">
    <citation type="journal article" date="1999" name="J. Mol. Biol.">
        <title>Solution structure by NMR of circulin A: a macrocyclic knotted peptide having anti-HIV activity.</title>
        <authorList>
            <person name="Daly N.L."/>
            <person name="Koltay A."/>
            <person name="Gustafson K.R."/>
            <person name="Boyd M.R."/>
            <person name="Casas-Finet J.R."/>
            <person name="Craik D.J."/>
        </authorList>
    </citation>
    <scope>STRUCTURE BY NMR</scope>
</reference>
<proteinExistence type="evidence at protein level"/>
<sequence>GIPCGESCVWIPCISAALGCSCKNKVCYRN</sequence>
<feature type="peptide" id="PRO_0000043599" description="Circulin-A">
    <location>
        <begin position="1"/>
        <end position="30"/>
    </location>
</feature>
<feature type="disulfide bond" evidence="1 2">
    <location>
        <begin position="4"/>
        <end position="20"/>
    </location>
</feature>
<feature type="disulfide bond" evidence="1 2">
    <location>
        <begin position="8"/>
        <end position="22"/>
    </location>
</feature>
<feature type="disulfide bond" evidence="1 2">
    <location>
        <begin position="13"/>
        <end position="27"/>
    </location>
</feature>
<feature type="cross-link" description="Cyclopeptide (Gly-Asn)">
    <location>
        <begin position="1"/>
        <end position="30"/>
    </location>
</feature>
<feature type="strand" evidence="5">
    <location>
        <begin position="9"/>
        <end position="11"/>
    </location>
</feature>
<feature type="helix" evidence="5">
    <location>
        <begin position="15"/>
        <end position="18"/>
    </location>
</feature>
<feature type="strand" evidence="5">
    <location>
        <begin position="28"/>
        <end position="30"/>
    </location>
</feature>
<accession>P56871</accession>
<accession>P82250</accession>